<proteinExistence type="evidence at transcript level"/>
<accession>Q5FW17</accession>
<accession>Q08D29</accession>
<accession>Q28ES6</accession>
<protein>
    <recommendedName>
        <fullName>Replication protein A 70 kDa DNA-binding subunit</fullName>
        <shortName>RP-A p70</shortName>
    </recommendedName>
    <alternativeName>
        <fullName>Replication factor A protein 1</fullName>
        <shortName>RF-A protein 1</shortName>
    </alternativeName>
</protein>
<sequence>MALPVLSEGAISAILGGDSSCKPTLQVINIRSINTGNGPPRYRLLMSDGLNTLSSFMLATQLNFLVDNNLLATNCICQVSRFIVNNLKDGRRVIIVMEMEVLKSADLVKGKIGNPHPYNDGQGPPQPAAPAPASAPPPSKPQNISAPPPPSMNRGASKLFGGGSVVNTPGGSQSKVVPIASLNPYQSKWTVRARVTNKGQIRTWSNSRGEGKLFSIEMVDESGEIRATAFNEQADKFFSLIEVNKVYYFSKGTLKIANKQYTSVKNDYEMTFNSETSVIPCDDSADVPMVQFEFVPIGELESKNKDTVLDIIGICKNAEEVTKVTIRSNNREVSKRNINLMDSSGKVVSTTLWGEDADKFDGSRQPVVAIKGARLSDFGGRSLSVLSSSTVMINPDIPEAFKLRAWFDSEGQVVEGTSISESRGGTGGGNTNWKSLLEVKTENLGHGEKADYFTSVATIVYLRKENCLYQACPSQDCNKKVIDQQNGLFRCEKCDKEFPNYKYRLILSANIADFGENQWITCFQESAESILGQNATYLGELKEKNEQAYDEVFQNANFRSYTFRIRVKLETYNDESRIKATAMDVKPVDHKEYSRRLIMNIRKMAAQGV</sequence>
<comment type="function">
    <text evidence="1">As part of the heterotrimeric replication protein A complex (RPA/RP-A), binds and stabilizes single-stranded DNA intermediates, that form during DNA replication or upon DNA stress. It prevents their reannealing and in parallel, recruits and activates different proteins and complexes involved in DNA metabolism. Thereby, it plays an essential role both in DNA replication and the cellular response to DNA damage.</text>
</comment>
<comment type="subunit">
    <text evidence="1 2">Component of the heterotrimeric canonical replication protein A complex (RPA). Interacts with rpain-a (By similarity).</text>
</comment>
<comment type="subcellular location">
    <subcellularLocation>
        <location evidence="1">Nucleus</location>
    </subcellularLocation>
    <subcellularLocation>
        <location evidence="1">Nucleus</location>
        <location evidence="1">PML body</location>
    </subcellularLocation>
</comment>
<comment type="similarity">
    <text evidence="5">Belongs to the replication factor A protein 1 family.</text>
</comment>
<gene>
    <name type="primary">rpa1</name>
    <name type="ORF">TGas057c05.1</name>
</gene>
<name>RFA1_XENTR</name>
<feature type="chain" id="PRO_0000097264" description="Replication protein A 70 kDa DNA-binding subunit">
    <location>
        <begin position="1"/>
        <end position="609"/>
    </location>
</feature>
<feature type="DNA-binding region" description="OB">
    <location>
        <begin position="189"/>
        <end position="273"/>
    </location>
</feature>
<feature type="zinc finger region" description="C4-type" evidence="3">
    <location>
        <begin position="472"/>
        <end position="494"/>
    </location>
</feature>
<feature type="region of interest" description="Disordered" evidence="4">
    <location>
        <begin position="112"/>
        <end position="164"/>
    </location>
</feature>
<feature type="compositionally biased region" description="Pro residues" evidence="4">
    <location>
        <begin position="124"/>
        <end position="151"/>
    </location>
</feature>
<evidence type="ECO:0000250" key="1">
    <source>
        <dbReference type="UniProtKB" id="P27694"/>
    </source>
</evidence>
<evidence type="ECO:0000250" key="2">
    <source>
        <dbReference type="UniProtKB" id="Q01588"/>
    </source>
</evidence>
<evidence type="ECO:0000255" key="3"/>
<evidence type="ECO:0000256" key="4">
    <source>
        <dbReference type="SAM" id="MobiDB-lite"/>
    </source>
</evidence>
<evidence type="ECO:0000305" key="5"/>
<dbReference type="EMBL" id="CR848086">
    <property type="protein sequence ID" value="CAJ81527.1"/>
    <property type="molecule type" value="mRNA"/>
</dbReference>
<dbReference type="EMBL" id="BC089665">
    <property type="protein sequence ID" value="AAH89665.1"/>
    <property type="molecule type" value="mRNA"/>
</dbReference>
<dbReference type="EMBL" id="BC123968">
    <property type="protein sequence ID" value="AAI23969.1"/>
    <property type="molecule type" value="mRNA"/>
</dbReference>
<dbReference type="RefSeq" id="NP_001015732.1">
    <property type="nucleotide sequence ID" value="NM_001015732.1"/>
</dbReference>
<dbReference type="SMR" id="Q5FW17"/>
<dbReference type="FunCoup" id="Q5FW17">
    <property type="interactions" value="3110"/>
</dbReference>
<dbReference type="STRING" id="8364.ENSXETP00000035502"/>
<dbReference type="PaxDb" id="8364-ENSXETP00000063755"/>
<dbReference type="DNASU" id="548449"/>
<dbReference type="GeneID" id="548449"/>
<dbReference type="KEGG" id="xtr:548449"/>
<dbReference type="AGR" id="Xenbase:XB-GENE-945047"/>
<dbReference type="CTD" id="6117"/>
<dbReference type="Xenbase" id="XB-GENE-945047">
    <property type="gene designation" value="rpa1"/>
</dbReference>
<dbReference type="eggNOG" id="KOG0851">
    <property type="taxonomic scope" value="Eukaryota"/>
</dbReference>
<dbReference type="HOGENOM" id="CLU_012393_2_1_1"/>
<dbReference type="InParanoid" id="Q5FW17"/>
<dbReference type="OMA" id="DQCDAFY"/>
<dbReference type="OrthoDB" id="1751331at2759"/>
<dbReference type="PhylomeDB" id="Q5FW17"/>
<dbReference type="Reactome" id="R-XTR-110312">
    <property type="pathway name" value="Translesion synthesis by REV1"/>
</dbReference>
<dbReference type="Reactome" id="R-XTR-110314">
    <property type="pathway name" value="Recognition of DNA damage by PCNA-containing replication complex"/>
</dbReference>
<dbReference type="Reactome" id="R-XTR-110320">
    <property type="pathway name" value="Translesion Synthesis by POLH"/>
</dbReference>
<dbReference type="Reactome" id="R-XTR-176187">
    <property type="pathway name" value="Activation of ATR in response to replication stress"/>
</dbReference>
<dbReference type="Reactome" id="R-XTR-3108214">
    <property type="pathway name" value="SUMOylation of DNA damage response and repair proteins"/>
</dbReference>
<dbReference type="Reactome" id="R-XTR-5651801">
    <property type="pathway name" value="PCNA-Dependent Long Patch Base Excision Repair"/>
</dbReference>
<dbReference type="Reactome" id="R-XTR-5655862">
    <property type="pathway name" value="Translesion synthesis by POLK"/>
</dbReference>
<dbReference type="Reactome" id="R-XTR-5656121">
    <property type="pathway name" value="Translesion synthesis by POLI"/>
</dbReference>
<dbReference type="Reactome" id="R-XTR-5656169">
    <property type="pathway name" value="Termination of translesion DNA synthesis"/>
</dbReference>
<dbReference type="Reactome" id="R-XTR-5685938">
    <property type="pathway name" value="HDR through Single Strand Annealing (SSA)"/>
</dbReference>
<dbReference type="Reactome" id="R-XTR-5693607">
    <property type="pathway name" value="Processing of DNA double-strand break ends"/>
</dbReference>
<dbReference type="Reactome" id="R-XTR-5696397">
    <property type="pathway name" value="Gap-filling DNA repair synthesis and ligation in GG-NER"/>
</dbReference>
<dbReference type="Reactome" id="R-XTR-5696400">
    <property type="pathway name" value="Dual Incision in GG-NER"/>
</dbReference>
<dbReference type="Reactome" id="R-XTR-6782135">
    <property type="pathway name" value="Dual incision in TC-NER"/>
</dbReference>
<dbReference type="Reactome" id="R-XTR-6782210">
    <property type="pathway name" value="Gap-filling DNA repair synthesis and ligation in TC-NER"/>
</dbReference>
<dbReference type="Reactome" id="R-XTR-6804756">
    <property type="pathway name" value="Regulation of TP53 Activity through Phosphorylation"/>
</dbReference>
<dbReference type="Reactome" id="R-XTR-68962">
    <property type="pathway name" value="Activation of the pre-replicative complex"/>
</dbReference>
<dbReference type="Reactome" id="R-XTR-69473">
    <property type="pathway name" value="G2/M DNA damage checkpoint"/>
</dbReference>
<dbReference type="Proteomes" id="UP000008143">
    <property type="component" value="Chromosome 2"/>
</dbReference>
<dbReference type="GO" id="GO:0005662">
    <property type="term" value="C:DNA replication factor A complex"/>
    <property type="evidence" value="ECO:0000250"/>
    <property type="project" value="UniProtKB"/>
</dbReference>
<dbReference type="GO" id="GO:0005634">
    <property type="term" value="C:nucleus"/>
    <property type="evidence" value="ECO:0000250"/>
    <property type="project" value="UniProtKB"/>
</dbReference>
<dbReference type="GO" id="GO:0016605">
    <property type="term" value="C:PML body"/>
    <property type="evidence" value="ECO:0007669"/>
    <property type="project" value="UniProtKB-SubCell"/>
</dbReference>
<dbReference type="GO" id="GO:0003684">
    <property type="term" value="F:damaged DNA binding"/>
    <property type="evidence" value="ECO:0000250"/>
    <property type="project" value="UniProtKB"/>
</dbReference>
<dbReference type="GO" id="GO:0003697">
    <property type="term" value="F:single-stranded DNA binding"/>
    <property type="evidence" value="ECO:0000250"/>
    <property type="project" value="UniProtKB"/>
</dbReference>
<dbReference type="GO" id="GO:0008270">
    <property type="term" value="F:zinc ion binding"/>
    <property type="evidence" value="ECO:0007669"/>
    <property type="project" value="UniProtKB-KW"/>
</dbReference>
<dbReference type="GO" id="GO:0006310">
    <property type="term" value="P:DNA recombination"/>
    <property type="evidence" value="ECO:0007669"/>
    <property type="project" value="UniProtKB-KW"/>
</dbReference>
<dbReference type="GO" id="GO:0006281">
    <property type="term" value="P:DNA repair"/>
    <property type="evidence" value="ECO:0007669"/>
    <property type="project" value="UniProtKB-KW"/>
</dbReference>
<dbReference type="GO" id="GO:0006260">
    <property type="term" value="P:DNA replication"/>
    <property type="evidence" value="ECO:0000250"/>
    <property type="project" value="UniProtKB"/>
</dbReference>
<dbReference type="GO" id="GO:0034502">
    <property type="term" value="P:protein localization to chromosome"/>
    <property type="evidence" value="ECO:0000250"/>
    <property type="project" value="UniProtKB"/>
</dbReference>
<dbReference type="CDD" id="cd04474">
    <property type="entry name" value="RPA1_DBD_A"/>
    <property type="match status" value="1"/>
</dbReference>
<dbReference type="CDD" id="cd04475">
    <property type="entry name" value="RPA1_DBD_B"/>
    <property type="match status" value="1"/>
</dbReference>
<dbReference type="CDD" id="cd04476">
    <property type="entry name" value="RPA1_DBD_C"/>
    <property type="match status" value="1"/>
</dbReference>
<dbReference type="CDD" id="cd04477">
    <property type="entry name" value="RPA1N"/>
    <property type="match status" value="1"/>
</dbReference>
<dbReference type="FunFam" id="2.40.50.140:FF:000041">
    <property type="entry name" value="Replication protein A subunit"/>
    <property type="match status" value="1"/>
</dbReference>
<dbReference type="FunFam" id="2.40.50.140:FF:000064">
    <property type="entry name" value="Replication protein A subunit"/>
    <property type="match status" value="1"/>
</dbReference>
<dbReference type="FunFam" id="2.40.50.140:FF:000090">
    <property type="entry name" value="Replication protein A subunit"/>
    <property type="match status" value="1"/>
</dbReference>
<dbReference type="FunFam" id="2.40.50.140:FF:000117">
    <property type="entry name" value="Replication protein A subunit"/>
    <property type="match status" value="1"/>
</dbReference>
<dbReference type="Gene3D" id="2.40.50.140">
    <property type="entry name" value="Nucleic acid-binding proteins"/>
    <property type="match status" value="4"/>
</dbReference>
<dbReference type="InterPro" id="IPR047192">
    <property type="entry name" value="Euk_RPA1_DBD_C"/>
</dbReference>
<dbReference type="InterPro" id="IPR012340">
    <property type="entry name" value="NA-bd_OB-fold"/>
</dbReference>
<dbReference type="InterPro" id="IPR004365">
    <property type="entry name" value="NA-bd_OB_tRNA"/>
</dbReference>
<dbReference type="InterPro" id="IPR013955">
    <property type="entry name" value="Rep_factor-A_C"/>
</dbReference>
<dbReference type="InterPro" id="IPR007199">
    <property type="entry name" value="Rep_factor-A_N"/>
</dbReference>
<dbReference type="InterPro" id="IPR031657">
    <property type="entry name" value="REPA_OB_2"/>
</dbReference>
<dbReference type="InterPro" id="IPR004591">
    <property type="entry name" value="Rfa1"/>
</dbReference>
<dbReference type="NCBIfam" id="TIGR00617">
    <property type="entry name" value="rpa1"/>
    <property type="match status" value="1"/>
</dbReference>
<dbReference type="PANTHER" id="PTHR47165">
    <property type="entry name" value="OS03G0429900 PROTEIN"/>
    <property type="match status" value="1"/>
</dbReference>
<dbReference type="PANTHER" id="PTHR47165:SF4">
    <property type="entry name" value="OS03G0429900 PROTEIN"/>
    <property type="match status" value="1"/>
</dbReference>
<dbReference type="Pfam" id="PF04057">
    <property type="entry name" value="Rep-A_N"/>
    <property type="match status" value="1"/>
</dbReference>
<dbReference type="Pfam" id="PF08646">
    <property type="entry name" value="Rep_fac-A_C"/>
    <property type="match status" value="1"/>
</dbReference>
<dbReference type="Pfam" id="PF16900">
    <property type="entry name" value="REPA_OB_2"/>
    <property type="match status" value="1"/>
</dbReference>
<dbReference type="Pfam" id="PF01336">
    <property type="entry name" value="tRNA_anti-codon"/>
    <property type="match status" value="1"/>
</dbReference>
<dbReference type="SUPFAM" id="SSF50249">
    <property type="entry name" value="Nucleic acid-binding proteins"/>
    <property type="match status" value="4"/>
</dbReference>
<reference key="1">
    <citation type="submission" date="2006-03" db="EMBL/GenBank/DDBJ databases">
        <authorList>
            <consortium name="Sanger Xenopus tropicalis EST/cDNA project"/>
        </authorList>
    </citation>
    <scope>NUCLEOTIDE SEQUENCE [LARGE SCALE MRNA]</scope>
    <source>
        <tissue>Gastrula</tissue>
    </source>
</reference>
<reference key="2">
    <citation type="submission" date="2006-09" db="EMBL/GenBank/DDBJ databases">
        <authorList>
            <consortium name="NIH - Xenopus Gene Collection (XGC) project"/>
        </authorList>
    </citation>
    <scope>NUCLEOTIDE SEQUENCE [LARGE SCALE MRNA]</scope>
    <source>
        <strain>N6</strain>
        <tissue>Oviduct</tissue>
    </source>
</reference>
<keyword id="KW-0227">DNA damage</keyword>
<keyword id="KW-0233">DNA recombination</keyword>
<keyword id="KW-0234">DNA repair</keyword>
<keyword id="KW-0235">DNA replication</keyword>
<keyword id="KW-0238">DNA-binding</keyword>
<keyword id="KW-0479">Metal-binding</keyword>
<keyword id="KW-0539">Nucleus</keyword>
<keyword id="KW-1185">Reference proteome</keyword>
<keyword id="KW-0862">Zinc</keyword>
<keyword id="KW-0863">Zinc-finger</keyword>
<organism>
    <name type="scientific">Xenopus tropicalis</name>
    <name type="common">Western clawed frog</name>
    <name type="synonym">Silurana tropicalis</name>
    <dbReference type="NCBI Taxonomy" id="8364"/>
    <lineage>
        <taxon>Eukaryota</taxon>
        <taxon>Metazoa</taxon>
        <taxon>Chordata</taxon>
        <taxon>Craniata</taxon>
        <taxon>Vertebrata</taxon>
        <taxon>Euteleostomi</taxon>
        <taxon>Amphibia</taxon>
        <taxon>Batrachia</taxon>
        <taxon>Anura</taxon>
        <taxon>Pipoidea</taxon>
        <taxon>Pipidae</taxon>
        <taxon>Xenopodinae</taxon>
        <taxon>Xenopus</taxon>
        <taxon>Silurana</taxon>
    </lineage>
</organism>